<comment type="function">
    <text evidence="1">Part of the ABC transporter complex FbpABC (TC 3.A.1.10.1) involved in Fe(3+) ions import. Probably responsible for the translocation of the substrate across the membrane (By similarity).</text>
</comment>
<comment type="subunit">
    <text evidence="3">The complex is composed of two ATP-binding proteins (FbpC), two transmembrane proteins (FbpB) and a solute-binding protein (FbpA).</text>
</comment>
<comment type="subcellular location">
    <subcellularLocation>
        <location evidence="3">Cell inner membrane</location>
        <topology evidence="3">Multi-pass membrane protein</topology>
    </subcellularLocation>
</comment>
<comment type="similarity">
    <text evidence="3">Belongs to the binding-protein-dependent transport system permease family. FbpB subfamily.</text>
</comment>
<comment type="sequence caution" evidence="3">
    <conflict type="erroneous initiation">
        <sequence resource="EMBL-CDS" id="AAC21774"/>
    </conflict>
</comment>
<name>FBPB2_HAEIN</name>
<feature type="chain" id="PRO_0000060018" description="Fe(3+)-transport system permease protein FbpB 2">
    <location>
        <begin position="1"/>
        <end position="506"/>
    </location>
</feature>
<feature type="transmembrane region" description="Helical" evidence="2">
    <location>
        <begin position="9"/>
        <end position="29"/>
    </location>
</feature>
<feature type="transmembrane region" description="Helical" evidence="2">
    <location>
        <begin position="57"/>
        <end position="77"/>
    </location>
</feature>
<feature type="transmembrane region" description="Helical" evidence="2">
    <location>
        <begin position="90"/>
        <end position="110"/>
    </location>
</feature>
<feature type="transmembrane region" description="Helical" evidence="2">
    <location>
        <begin position="116"/>
        <end position="136"/>
    </location>
</feature>
<feature type="transmembrane region" description="Helical" evidence="2">
    <location>
        <begin position="174"/>
        <end position="194"/>
    </location>
</feature>
<feature type="transmembrane region" description="Helical" evidence="2">
    <location>
        <begin position="218"/>
        <end position="238"/>
    </location>
</feature>
<feature type="transmembrane region" description="Helical" evidence="2">
    <location>
        <begin position="275"/>
        <end position="295"/>
    </location>
</feature>
<feature type="transmembrane region" description="Helical" evidence="2">
    <location>
        <begin position="314"/>
        <end position="334"/>
    </location>
</feature>
<feature type="transmembrane region" description="Helical" evidence="2">
    <location>
        <begin position="350"/>
        <end position="370"/>
    </location>
</feature>
<feature type="transmembrane region" description="Helical" evidence="2">
    <location>
        <begin position="379"/>
        <end position="399"/>
    </location>
</feature>
<feature type="transmembrane region" description="Helical" evidence="2">
    <location>
        <begin position="428"/>
        <end position="448"/>
    </location>
</feature>
<feature type="transmembrane region" description="Helical" evidence="2">
    <location>
        <begin position="480"/>
        <end position="500"/>
    </location>
</feature>
<feature type="domain" description="ABC transmembrane type-1 1" evidence="2">
    <location>
        <begin position="52"/>
        <end position="233"/>
    </location>
</feature>
<feature type="domain" description="ABC transmembrane type-1 2" evidence="2">
    <location>
        <begin position="310"/>
        <end position="500"/>
    </location>
</feature>
<feature type="sequence variant" description="In strain: TN106.">
    <original>F</original>
    <variation>L</variation>
    <location>
        <position position="72"/>
    </location>
</feature>
<feature type="sequence variant" description="In strain: TN106.">
    <original>G</original>
    <variation>C</variation>
    <location>
        <position position="104"/>
    </location>
</feature>
<feature type="sequence variant" description="In strain: TN106.">
    <original>V</original>
    <variation>G</variation>
    <location>
        <position position="116"/>
    </location>
</feature>
<feature type="sequence variant" description="In strain: TN106.">
    <original>S</original>
    <variation>F</variation>
    <location>
        <position position="167"/>
    </location>
</feature>
<feature type="sequence variant" description="In strain: TN106.">
    <original>T</original>
    <variation>M</variation>
    <location>
        <position position="252"/>
    </location>
</feature>
<evidence type="ECO:0000250" key="1"/>
<evidence type="ECO:0000255" key="2">
    <source>
        <dbReference type="PROSITE-ProRule" id="PRU00441"/>
    </source>
</evidence>
<evidence type="ECO:0000305" key="3"/>
<reference key="1">
    <citation type="journal article" date="1995" name="Science">
        <title>Whole-genome random sequencing and assembly of Haemophilus influenzae Rd.</title>
        <authorList>
            <person name="Fleischmann R.D."/>
            <person name="Adams M.D."/>
            <person name="White O."/>
            <person name="Clayton R.A."/>
            <person name="Kirkness E.F."/>
            <person name="Kerlavage A.R."/>
            <person name="Bult C.J."/>
            <person name="Tomb J.-F."/>
            <person name="Dougherty B.A."/>
            <person name="Merrick J.M."/>
            <person name="McKenney K."/>
            <person name="Sutton G.G."/>
            <person name="FitzHugh W."/>
            <person name="Fields C.A."/>
            <person name="Gocayne J.D."/>
            <person name="Scott J.D."/>
            <person name="Shirley R."/>
            <person name="Liu L.-I."/>
            <person name="Glodek A."/>
            <person name="Kelley J.M."/>
            <person name="Weidman J.F."/>
            <person name="Phillips C.A."/>
            <person name="Spriggs T."/>
            <person name="Hedblom E."/>
            <person name="Cotton M.D."/>
            <person name="Utterback T.R."/>
            <person name="Hanna M.C."/>
            <person name="Nguyen D.T."/>
            <person name="Saudek D.M."/>
            <person name="Brandon R.C."/>
            <person name="Fine L.D."/>
            <person name="Fritchman J.L."/>
            <person name="Fuhrmann J.L."/>
            <person name="Geoghagen N.S.M."/>
            <person name="Gnehm C.L."/>
            <person name="McDonald L.A."/>
            <person name="Small K.V."/>
            <person name="Fraser C.M."/>
            <person name="Smith H.O."/>
            <person name="Venter J.C."/>
        </authorList>
    </citation>
    <scope>NUCLEOTIDE SEQUENCE [LARGE SCALE GENOMIC DNA]</scope>
    <source>
        <strain>ATCC 51907 / DSM 11121 / KW20 / Rd</strain>
    </source>
</reference>
<reference key="2">
    <citation type="journal article" date="1994" name="Infect. Immun.">
        <title>Identification of a locus involved in the utilization of iron by Haemophilus influenzae.</title>
        <authorList>
            <person name="Sanders J.D."/>
            <person name="Cope L.D."/>
            <person name="Hansen E.J."/>
        </authorList>
    </citation>
    <scope>NUCLEOTIDE SEQUENCE [GENOMIC DNA]</scope>
    <source>
        <strain>NTHi TN106</strain>
    </source>
</reference>
<proteinExistence type="inferred from homology"/>
<organism>
    <name type="scientific">Haemophilus influenzae (strain ATCC 51907 / DSM 11121 / KW20 / Rd)</name>
    <dbReference type="NCBI Taxonomy" id="71421"/>
    <lineage>
        <taxon>Bacteria</taxon>
        <taxon>Pseudomonadati</taxon>
        <taxon>Pseudomonadota</taxon>
        <taxon>Gammaproteobacteria</taxon>
        <taxon>Pasteurellales</taxon>
        <taxon>Pasteurellaceae</taxon>
        <taxon>Haemophilus</taxon>
    </lineage>
</organism>
<dbReference type="EMBL" id="L42023">
    <property type="protein sequence ID" value="AAC21774.1"/>
    <property type="status" value="ALT_INIT"/>
    <property type="molecule type" value="Genomic_DNA"/>
</dbReference>
<dbReference type="EMBL" id="S72674">
    <property type="protein sequence ID" value="AAB32111.1"/>
    <property type="molecule type" value="Genomic_DNA"/>
</dbReference>
<dbReference type="PIR" id="T10887">
    <property type="entry name" value="D64048"/>
</dbReference>
<dbReference type="RefSeq" id="NP_438272.2">
    <property type="nucleotide sequence ID" value="NC_000907.1"/>
</dbReference>
<dbReference type="SMR" id="P71338"/>
<dbReference type="STRING" id="71421.HI_0098"/>
<dbReference type="TCDB" id="3.A.1.10.3">
    <property type="family name" value="the atp-binding cassette (abc) superfamily"/>
</dbReference>
<dbReference type="EnsemblBacteria" id="AAC21774">
    <property type="protein sequence ID" value="AAC21774"/>
    <property type="gene ID" value="HI_0098"/>
</dbReference>
<dbReference type="KEGG" id="hin:HI_0098"/>
<dbReference type="PATRIC" id="fig|71421.8.peg.101"/>
<dbReference type="eggNOG" id="COG1178">
    <property type="taxonomic scope" value="Bacteria"/>
</dbReference>
<dbReference type="HOGENOM" id="CLU_021838_0_0_6"/>
<dbReference type="OrthoDB" id="9790211at2"/>
<dbReference type="PhylomeDB" id="P71338"/>
<dbReference type="Proteomes" id="UP000000579">
    <property type="component" value="Chromosome"/>
</dbReference>
<dbReference type="GO" id="GO:0005886">
    <property type="term" value="C:plasma membrane"/>
    <property type="evidence" value="ECO:0007669"/>
    <property type="project" value="UniProtKB-SubCell"/>
</dbReference>
<dbReference type="GO" id="GO:0006826">
    <property type="term" value="P:iron ion transport"/>
    <property type="evidence" value="ECO:0007669"/>
    <property type="project" value="UniProtKB-KW"/>
</dbReference>
<dbReference type="GO" id="GO:0055085">
    <property type="term" value="P:transmembrane transport"/>
    <property type="evidence" value="ECO:0007669"/>
    <property type="project" value="InterPro"/>
</dbReference>
<dbReference type="CDD" id="cd06261">
    <property type="entry name" value="TM_PBP2"/>
    <property type="match status" value="2"/>
</dbReference>
<dbReference type="Gene3D" id="1.10.3720.10">
    <property type="entry name" value="MetI-like"/>
    <property type="match status" value="2"/>
</dbReference>
<dbReference type="InterPro" id="IPR000515">
    <property type="entry name" value="MetI-like"/>
</dbReference>
<dbReference type="InterPro" id="IPR035906">
    <property type="entry name" value="MetI-like_sf"/>
</dbReference>
<dbReference type="PANTHER" id="PTHR43357:SF3">
    <property type="entry name" value="FE(3+)-TRANSPORT SYSTEM PERMEASE PROTEIN FBPB 2"/>
    <property type="match status" value="1"/>
</dbReference>
<dbReference type="PANTHER" id="PTHR43357">
    <property type="entry name" value="INNER MEMBRANE ABC TRANSPORTER PERMEASE PROTEIN YDCV"/>
    <property type="match status" value="1"/>
</dbReference>
<dbReference type="Pfam" id="PF00528">
    <property type="entry name" value="BPD_transp_1"/>
    <property type="match status" value="2"/>
</dbReference>
<dbReference type="SUPFAM" id="SSF161098">
    <property type="entry name" value="MetI-like"/>
    <property type="match status" value="2"/>
</dbReference>
<dbReference type="PROSITE" id="PS50928">
    <property type="entry name" value="ABC_TM1"/>
    <property type="match status" value="2"/>
</dbReference>
<keyword id="KW-0997">Cell inner membrane</keyword>
<keyword id="KW-1003">Cell membrane</keyword>
<keyword id="KW-0406">Ion transport</keyword>
<keyword id="KW-0408">Iron</keyword>
<keyword id="KW-0410">Iron transport</keyword>
<keyword id="KW-0472">Membrane</keyword>
<keyword id="KW-1185">Reference proteome</keyword>
<keyword id="KW-0677">Repeat</keyword>
<keyword id="KW-0812">Transmembrane</keyword>
<keyword id="KW-1133">Transmembrane helix</keyword>
<keyword id="KW-0813">Transport</keyword>
<protein>
    <recommendedName>
        <fullName>Fe(3+)-transport system permease protein FbpB 2</fullName>
    </recommendedName>
    <alternativeName>
        <fullName>Iron(III)-transport system permease protein FbpB 2</fullName>
    </alternativeName>
</protein>
<sequence length="506" mass="56547">MPRRPPFWLTLLIILIGLPLCLPFLYVILRATEVGLTRSVELLFRPRMAELLSNTMLLMVCVTIGAISLGTFCAFLLERYRFFGKAFFEVAMTLPLCIPAFVSGFTWISLTFRVEVFWGTIGIMTLSSFPLAYLPVSAILKRLDRSLEEVSLSLGKSPVYTFWYAISPQLKPAIGSSILLIALHMLVEFGAVSILNYQTFTTAIFQEYEMSFNNSTAALLSAVLMAICILIVFGEIFFRGKQTLYHSGKGVTRPYLVKTLSFGKQCLTFGFFSSIFILSIGVPVIMLIYWLIVGTSLESAGDFSEFLSAFSNSFIISGLGALLTVMCALPLVWAAVRYRSYLTIWIDRLPYLLHAVPGLVIALSLVYFSIHYANDLYQTFFVIIIAYFMLYLPMAQTTLRASLEQLSDQIEKVGQSLGRNPFYIFRTLTLPAILPGVAAAFALVFLNLMKELTATLLLTSNDIKTLSIAVWEHTSDAQYAAATPYALMLVLFSGIPVFLLKKYAFK</sequence>
<gene>
    <name type="primary">fbpB2</name>
    <name type="synonym">hitB</name>
    <name type="ordered locus">HI_0098</name>
</gene>
<accession>P71338</accession>
<accession>Q53440</accession>